<dbReference type="EC" id="5.1.1.8" evidence="2"/>
<dbReference type="EMBL" id="CP002026">
    <property type="protein sequence ID" value="ADH87493.1"/>
    <property type="molecule type" value="Genomic_DNA"/>
</dbReference>
<dbReference type="RefSeq" id="WP_013164998.1">
    <property type="nucleotide sequence ID" value="NC_014217.1"/>
</dbReference>
<dbReference type="SMR" id="D7A0Y3"/>
<dbReference type="STRING" id="639283.Snov_0157"/>
<dbReference type="KEGG" id="sno:Snov_0157"/>
<dbReference type="eggNOG" id="COG3938">
    <property type="taxonomic scope" value="Bacteria"/>
</dbReference>
<dbReference type="HOGENOM" id="CLU_036729_0_0_5"/>
<dbReference type="OrthoDB" id="181267at2"/>
<dbReference type="Proteomes" id="UP000006633">
    <property type="component" value="Chromosome"/>
</dbReference>
<dbReference type="GO" id="GO:0047580">
    <property type="term" value="F:4-hydroxyproline epimerase activity"/>
    <property type="evidence" value="ECO:0007669"/>
    <property type="project" value="UniProtKB-EC"/>
</dbReference>
<dbReference type="GO" id="GO:0050346">
    <property type="term" value="F:trans-L-3-hydroxyproline dehydratase activity"/>
    <property type="evidence" value="ECO:0007669"/>
    <property type="project" value="UniProtKB-ARBA"/>
</dbReference>
<dbReference type="FunFam" id="3.10.310.10:FF:000005">
    <property type="entry name" value="Proline racemase"/>
    <property type="match status" value="1"/>
</dbReference>
<dbReference type="Gene3D" id="3.10.310.10">
    <property type="entry name" value="Diaminopimelate Epimerase, Chain A, domain 1"/>
    <property type="match status" value="2"/>
</dbReference>
<dbReference type="InterPro" id="IPR008794">
    <property type="entry name" value="Pro_racemase_fam"/>
</dbReference>
<dbReference type="NCBIfam" id="NF010578">
    <property type="entry name" value="PRK13971.1"/>
    <property type="match status" value="1"/>
</dbReference>
<dbReference type="PANTHER" id="PTHR33442:SF5">
    <property type="entry name" value="BIFUNCTIONAL TRANS-3-HYDROXY-L-PROLINE DEHYDRATASE_2-EPIMERASE"/>
    <property type="match status" value="1"/>
</dbReference>
<dbReference type="PANTHER" id="PTHR33442">
    <property type="entry name" value="TRANS-3-HYDROXY-L-PROLINE DEHYDRATASE"/>
    <property type="match status" value="1"/>
</dbReference>
<dbReference type="Pfam" id="PF05544">
    <property type="entry name" value="Pro_racemase"/>
    <property type="match status" value="1"/>
</dbReference>
<dbReference type="PIRSF" id="PIRSF029792">
    <property type="entry name" value="Pro_racemase"/>
    <property type="match status" value="1"/>
</dbReference>
<dbReference type="SFLD" id="SFLDS00028">
    <property type="entry name" value="Proline_Racemase"/>
    <property type="match status" value="1"/>
</dbReference>
<dbReference type="SUPFAM" id="SSF54506">
    <property type="entry name" value="Diaminopimelate epimerase-like"/>
    <property type="match status" value="1"/>
</dbReference>
<protein>
    <recommendedName>
        <fullName evidence="3">4-hydroxyproline 2-epimerase</fullName>
        <shortName>4Hyp 2-epimerase</shortName>
        <shortName evidence="3">4HypE</shortName>
        <ecNumber evidence="2">5.1.1.8</ecNumber>
    </recommendedName>
</protein>
<accession>D7A0Y3</accession>
<sequence>MARHSFFCIDGHTCGNPVRLVAGGGPNLQGANMIEKRAHFLAEYDWIRTGLMFEPRGHDMMSGSILYPPTRPDCDVAILFIETSGCLPMCGHGTIGTVTMAIEHGLVTPKIPGVLMLDTPAGVVKAEYRQEGQYVEEVRITNVPAFLYARGLTAECPGLGEVMVDVAYGGNFYAIVEPQEHFRDMADFTAGELIGMSGALRKALNAKYEFVHPEKPEIRGLSHILWTGAPKHAEAHARNAVFYGDKAIDRSPCGTGTSARIAHWAANGKLKVGDDFVHESIIGSLFKGRVEATARVGNVDAIIPSIGGWARMTGYNTIFIDDRDPFAHGFVVV</sequence>
<keyword id="KW-0413">Isomerase</keyword>
<gene>
    <name evidence="5" type="ordered locus">Snov_0157</name>
</gene>
<organism>
    <name type="scientific">Ancylobacter novellus (strain ATCC 8093 / DSM 506 / JCM 20403 / CCM 1077 / IAM 12100 / NBRC 12443 / NCIMB 10456)</name>
    <name type="common">Starkeya novella</name>
    <dbReference type="NCBI Taxonomy" id="639283"/>
    <lineage>
        <taxon>Bacteria</taxon>
        <taxon>Pseudomonadati</taxon>
        <taxon>Pseudomonadota</taxon>
        <taxon>Alphaproteobacteria</taxon>
        <taxon>Hyphomicrobiales</taxon>
        <taxon>Xanthobacteraceae</taxon>
        <taxon>Ancylobacter</taxon>
    </lineage>
</organism>
<comment type="function">
    <text evidence="2">Catalyzes the epimerization of trans-4-hydroxy-L-proline (t4LHyp) to cis-4-hydroxy-D-proline (c4DHyp). May be involved in a degradation pathway of t4LHyp, which would allow S.novella to grow on t4LHyp as a sole carbon source.</text>
</comment>
<comment type="catalytic activity">
    <reaction evidence="2">
        <text>trans-4-hydroxy-L-proline = cis-4-hydroxy-D-proline</text>
        <dbReference type="Rhea" id="RHEA:21152"/>
        <dbReference type="ChEBI" id="CHEBI:57690"/>
        <dbReference type="ChEBI" id="CHEBI:58375"/>
        <dbReference type="EC" id="5.1.1.8"/>
    </reaction>
</comment>
<comment type="similarity">
    <text evidence="4">Belongs to the proline racemase family.</text>
</comment>
<proteinExistence type="evidence at protein level"/>
<name>4HYPE_ANCN5</name>
<reference key="1">
    <citation type="journal article" date="2012" name="Stand. Genomic Sci.">
        <title>Complete genome sequence of the facultatively chemolithoautotrophic and methylotrophic alpha Proteobacterium Starkeya novella type strain (ATCC 8093(T)).</title>
        <authorList>
            <person name="Kappler U."/>
            <person name="Davenport K."/>
            <person name="Beatson S."/>
            <person name="Lucas S."/>
            <person name="Lapidus A."/>
            <person name="Copeland A."/>
            <person name="Berry K.W."/>
            <person name="Glavina Del Rio T."/>
            <person name="Hammon N."/>
            <person name="Dalin E."/>
            <person name="Tice H."/>
            <person name="Pitluck S."/>
            <person name="Richardson P."/>
            <person name="Bruce D."/>
            <person name="Goodwin L.A."/>
            <person name="Han C."/>
            <person name="Tapia R."/>
            <person name="Detter J.C."/>
            <person name="Chang Y.J."/>
            <person name="Jeffries C.D."/>
            <person name="Land M."/>
            <person name="Hauser L."/>
            <person name="Kyrpides N.C."/>
            <person name="Goker M."/>
            <person name="Ivanova N."/>
            <person name="Klenk H.P."/>
            <person name="Woyke T."/>
        </authorList>
    </citation>
    <scope>NUCLEOTIDE SEQUENCE [LARGE SCALE GENOMIC DNA]</scope>
    <source>
        <strain>ATCC 8093 / DSM 506 / JCM 20403 / CCM 1077 / IAM 12100 / NBRC 12443 / NCIMB 10456</strain>
    </source>
</reference>
<reference key="2">
    <citation type="journal article" date="2015" name="J. Am. Chem. Soc.">
        <title>A unique cis-3-hydroxy-L-proline dehydratase in the enolase superfamily.</title>
        <authorList>
            <person name="Zhang X."/>
            <person name="Kumar R."/>
            <person name="Vetting M.W."/>
            <person name="Zhao S."/>
            <person name="Jacobson M.P."/>
            <person name="Almo S.C."/>
            <person name="Gerlt J.A."/>
        </authorList>
    </citation>
    <scope>FUNCTION</scope>
    <scope>CATALYTIC ACTIVITY</scope>
    <source>
        <strain>ATCC 8093 / DSM 506 / JCM 20403 / CCM 1077 / IAM 12100 / NBRC 12443 / NCIMB 10456</strain>
    </source>
</reference>
<feature type="chain" id="PRO_0000433402" description="4-hydroxyproline 2-epimerase">
    <location>
        <begin position="1"/>
        <end position="333"/>
    </location>
</feature>
<feature type="active site" description="Proton acceptor" evidence="1">
    <location>
        <position position="90"/>
    </location>
</feature>
<feature type="active site" description="Proton donor" evidence="1">
    <location>
        <position position="253"/>
    </location>
</feature>
<feature type="binding site" evidence="1">
    <location>
        <begin position="91"/>
        <end position="92"/>
    </location>
    <ligand>
        <name>substrate</name>
    </ligand>
</feature>
<feature type="binding site" evidence="1">
    <location>
        <position position="223"/>
    </location>
    <ligand>
        <name>substrate</name>
    </ligand>
</feature>
<feature type="binding site" evidence="1">
    <location>
        <position position="249"/>
    </location>
    <ligand>
        <name>substrate</name>
    </ligand>
</feature>
<feature type="binding site" evidence="1">
    <location>
        <begin position="254"/>
        <end position="255"/>
    </location>
    <ligand>
        <name>substrate</name>
    </ligand>
</feature>
<evidence type="ECO:0000250" key="1">
    <source>
        <dbReference type="UniProtKB" id="Q4KGU2"/>
    </source>
</evidence>
<evidence type="ECO:0000269" key="2">
    <source>
    </source>
</evidence>
<evidence type="ECO:0000303" key="3">
    <source>
    </source>
</evidence>
<evidence type="ECO:0000305" key="4"/>
<evidence type="ECO:0000312" key="5">
    <source>
        <dbReference type="EMBL" id="ADH87493.1"/>
    </source>
</evidence>